<protein>
    <recommendedName>
        <fullName evidence="1">Glucosamine-6-phosphate deaminase</fullName>
        <ecNumber evidence="1">3.5.99.6</ecNumber>
    </recommendedName>
    <alternativeName>
        <fullName evidence="1">GlcN6P deaminase</fullName>
        <shortName evidence="1">GNPDA</shortName>
    </alternativeName>
    <alternativeName>
        <fullName evidence="1">Glucosamine-6-phosphate isomerase</fullName>
    </alternativeName>
</protein>
<name>NAGB_STRA3</name>
<feature type="chain" id="PRO_0000160172" description="Glucosamine-6-phosphate deaminase">
    <location>
        <begin position="1"/>
        <end position="233"/>
    </location>
</feature>
<feature type="active site" description="Proton acceptor; for enolization step" evidence="1">
    <location>
        <position position="62"/>
    </location>
</feature>
<feature type="active site" description="For ring-opening step" evidence="1">
    <location>
        <position position="128"/>
    </location>
</feature>
<feature type="active site" description="Proton acceptor; for ring-opening step" evidence="1">
    <location>
        <position position="130"/>
    </location>
</feature>
<feature type="active site" description="For ring-opening step" evidence="1">
    <location>
        <position position="135"/>
    </location>
</feature>
<organism>
    <name type="scientific">Streptococcus agalactiae serotype III (strain NEM316)</name>
    <dbReference type="NCBI Taxonomy" id="211110"/>
    <lineage>
        <taxon>Bacteria</taxon>
        <taxon>Bacillati</taxon>
        <taxon>Bacillota</taxon>
        <taxon>Bacilli</taxon>
        <taxon>Lactobacillales</taxon>
        <taxon>Streptococcaceae</taxon>
        <taxon>Streptococcus</taxon>
    </lineage>
</organism>
<proteinExistence type="inferred from homology"/>
<accession>P65514</accession>
<accession>Q8E0D5</accession>
<accession>Q8E609</accession>
<gene>
    <name evidence="1" type="primary">nagB</name>
    <name type="ordered locus">gbs0819</name>
</gene>
<dbReference type="EC" id="3.5.99.6" evidence="1"/>
<dbReference type="EMBL" id="AL766847">
    <property type="protein sequence ID" value="CAD46463.1"/>
    <property type="molecule type" value="Genomic_DNA"/>
</dbReference>
<dbReference type="RefSeq" id="WP_001263956.1">
    <property type="nucleotide sequence ID" value="NC_004368.1"/>
</dbReference>
<dbReference type="SMR" id="P65514"/>
<dbReference type="KEGG" id="san:gbs0819"/>
<dbReference type="eggNOG" id="COG0363">
    <property type="taxonomic scope" value="Bacteria"/>
</dbReference>
<dbReference type="HOGENOM" id="CLU_049611_1_0_9"/>
<dbReference type="UniPathway" id="UPA00629">
    <property type="reaction ID" value="UER00684"/>
</dbReference>
<dbReference type="Proteomes" id="UP000000823">
    <property type="component" value="Chromosome"/>
</dbReference>
<dbReference type="GO" id="GO:0005737">
    <property type="term" value="C:cytoplasm"/>
    <property type="evidence" value="ECO:0007669"/>
    <property type="project" value="TreeGrafter"/>
</dbReference>
<dbReference type="GO" id="GO:0004342">
    <property type="term" value="F:glucosamine-6-phosphate deaminase activity"/>
    <property type="evidence" value="ECO:0007669"/>
    <property type="project" value="UniProtKB-UniRule"/>
</dbReference>
<dbReference type="GO" id="GO:0042802">
    <property type="term" value="F:identical protein binding"/>
    <property type="evidence" value="ECO:0007669"/>
    <property type="project" value="TreeGrafter"/>
</dbReference>
<dbReference type="GO" id="GO:0005975">
    <property type="term" value="P:carbohydrate metabolic process"/>
    <property type="evidence" value="ECO:0007669"/>
    <property type="project" value="InterPro"/>
</dbReference>
<dbReference type="GO" id="GO:0006043">
    <property type="term" value="P:glucosamine catabolic process"/>
    <property type="evidence" value="ECO:0007669"/>
    <property type="project" value="TreeGrafter"/>
</dbReference>
<dbReference type="GO" id="GO:0006046">
    <property type="term" value="P:N-acetylglucosamine catabolic process"/>
    <property type="evidence" value="ECO:0007669"/>
    <property type="project" value="TreeGrafter"/>
</dbReference>
<dbReference type="GO" id="GO:0019262">
    <property type="term" value="P:N-acetylneuraminate catabolic process"/>
    <property type="evidence" value="ECO:0007669"/>
    <property type="project" value="UniProtKB-UniRule"/>
</dbReference>
<dbReference type="CDD" id="cd01399">
    <property type="entry name" value="GlcN6P_deaminase"/>
    <property type="match status" value="1"/>
</dbReference>
<dbReference type="FunFam" id="3.40.50.1360:FF:000003">
    <property type="entry name" value="Glucosamine-6-phosphate deaminase"/>
    <property type="match status" value="1"/>
</dbReference>
<dbReference type="Gene3D" id="3.40.50.1360">
    <property type="match status" value="1"/>
</dbReference>
<dbReference type="HAMAP" id="MF_01241">
    <property type="entry name" value="GlcN6P_deamin"/>
    <property type="match status" value="1"/>
</dbReference>
<dbReference type="InterPro" id="IPR006148">
    <property type="entry name" value="Glc/Gal-6P_isomerase"/>
</dbReference>
<dbReference type="InterPro" id="IPR004547">
    <property type="entry name" value="Glucosamine6P_isomerase"/>
</dbReference>
<dbReference type="InterPro" id="IPR018321">
    <property type="entry name" value="Glucosamine6P_isomerase_CS"/>
</dbReference>
<dbReference type="InterPro" id="IPR037171">
    <property type="entry name" value="NagB/RpiA_transferase-like"/>
</dbReference>
<dbReference type="PANTHER" id="PTHR11280">
    <property type="entry name" value="GLUCOSAMINE-6-PHOSPHATE ISOMERASE"/>
    <property type="match status" value="1"/>
</dbReference>
<dbReference type="PANTHER" id="PTHR11280:SF5">
    <property type="entry name" value="GLUCOSAMINE-6-PHOSPHATE ISOMERASE"/>
    <property type="match status" value="1"/>
</dbReference>
<dbReference type="Pfam" id="PF01182">
    <property type="entry name" value="Glucosamine_iso"/>
    <property type="match status" value="1"/>
</dbReference>
<dbReference type="SUPFAM" id="SSF100950">
    <property type="entry name" value="NagB/RpiA/CoA transferase-like"/>
    <property type="match status" value="1"/>
</dbReference>
<dbReference type="PROSITE" id="PS01161">
    <property type="entry name" value="GLC_GALNAC_ISOMERASE"/>
    <property type="match status" value="1"/>
</dbReference>
<sequence>MRVITVKNDIEGGKIAFTLLEEKMKAGAQTLGLATGSSPITFYEEIVKSNLDFSNMVSINLDEYVGIAASNDQSYSYFMHKHLFDAKPFKENNLPNGLAKDLKEEIKRYDAVINANPIDFQILGIGRNGHIGFNEPGTPFDITTHVVDLAPSTIEANSRFFNSIDDVPKQALSMGIGSIMKSKTIVLVAYGIEKAEAIASMIKGPITEDMPASILQKHDDVVIIVDEAAASKL</sequence>
<comment type="function">
    <text evidence="1">Catalyzes the reversible isomerization-deamination of glucosamine 6-phosphate (GlcN6P) to form fructose 6-phosphate (Fru6P) and ammonium ion.</text>
</comment>
<comment type="catalytic activity">
    <reaction evidence="1">
        <text>alpha-D-glucosamine 6-phosphate + H2O = beta-D-fructose 6-phosphate + NH4(+)</text>
        <dbReference type="Rhea" id="RHEA:12172"/>
        <dbReference type="ChEBI" id="CHEBI:15377"/>
        <dbReference type="ChEBI" id="CHEBI:28938"/>
        <dbReference type="ChEBI" id="CHEBI:57634"/>
        <dbReference type="ChEBI" id="CHEBI:75989"/>
        <dbReference type="EC" id="3.5.99.6"/>
    </reaction>
</comment>
<comment type="pathway">
    <text evidence="1">Amino-sugar metabolism; N-acetylneuraminate degradation; D-fructose 6-phosphate from N-acetylneuraminate: step 5/5.</text>
</comment>
<comment type="similarity">
    <text evidence="1">Belongs to the glucosamine/galactosamine-6-phosphate isomerase family. NagB subfamily.</text>
</comment>
<reference key="1">
    <citation type="journal article" date="2002" name="Mol. Microbiol.">
        <title>Genome sequence of Streptococcus agalactiae, a pathogen causing invasive neonatal disease.</title>
        <authorList>
            <person name="Glaser P."/>
            <person name="Rusniok C."/>
            <person name="Buchrieser C."/>
            <person name="Chevalier F."/>
            <person name="Frangeul L."/>
            <person name="Msadek T."/>
            <person name="Zouine M."/>
            <person name="Couve E."/>
            <person name="Lalioui L."/>
            <person name="Poyart C."/>
            <person name="Trieu-Cuot P."/>
            <person name="Kunst F."/>
        </authorList>
    </citation>
    <scope>NUCLEOTIDE SEQUENCE [LARGE SCALE GENOMIC DNA]</scope>
    <source>
        <strain>NEM316</strain>
    </source>
</reference>
<evidence type="ECO:0000255" key="1">
    <source>
        <dbReference type="HAMAP-Rule" id="MF_01241"/>
    </source>
</evidence>
<keyword id="KW-0119">Carbohydrate metabolism</keyword>
<keyword id="KW-0378">Hydrolase</keyword>